<keyword id="KW-0004">4Fe-4S</keyword>
<keyword id="KW-0148">Chlorophyll</keyword>
<keyword id="KW-0150">Chloroplast</keyword>
<keyword id="KW-0157">Chromophore</keyword>
<keyword id="KW-0249">Electron transport</keyword>
<keyword id="KW-0408">Iron</keyword>
<keyword id="KW-0411">Iron-sulfur</keyword>
<keyword id="KW-0460">Magnesium</keyword>
<keyword id="KW-0472">Membrane</keyword>
<keyword id="KW-0479">Metal-binding</keyword>
<keyword id="KW-0560">Oxidoreductase</keyword>
<keyword id="KW-0602">Photosynthesis</keyword>
<keyword id="KW-0603">Photosystem I</keyword>
<keyword id="KW-0934">Plastid</keyword>
<keyword id="KW-0793">Thylakoid</keyword>
<keyword id="KW-0812">Transmembrane</keyword>
<keyword id="KW-1133">Transmembrane helix</keyword>
<keyword id="KW-0813">Transport</keyword>
<proteinExistence type="inferred from homology"/>
<dbReference type="EC" id="1.97.1.12" evidence="1"/>
<dbReference type="EMBL" id="D17510">
    <property type="protein sequence ID" value="BAA04419.1"/>
    <property type="molecule type" value="Genomic_DNA"/>
</dbReference>
<dbReference type="PIR" id="T07543">
    <property type="entry name" value="T07543"/>
</dbReference>
<dbReference type="RefSeq" id="NP_042464.1">
    <property type="nucleotide sequence ID" value="NC_001631.1"/>
</dbReference>
<dbReference type="SMR" id="P41639"/>
<dbReference type="GeneID" id="809016"/>
<dbReference type="GO" id="GO:0009535">
    <property type="term" value="C:chloroplast thylakoid membrane"/>
    <property type="evidence" value="ECO:0007669"/>
    <property type="project" value="UniProtKB-SubCell"/>
</dbReference>
<dbReference type="GO" id="GO:0009522">
    <property type="term" value="C:photosystem I"/>
    <property type="evidence" value="ECO:0007669"/>
    <property type="project" value="UniProtKB-KW"/>
</dbReference>
<dbReference type="GO" id="GO:0051539">
    <property type="term" value="F:4 iron, 4 sulfur cluster binding"/>
    <property type="evidence" value="ECO:0007669"/>
    <property type="project" value="UniProtKB-KW"/>
</dbReference>
<dbReference type="GO" id="GO:0016168">
    <property type="term" value="F:chlorophyll binding"/>
    <property type="evidence" value="ECO:0007669"/>
    <property type="project" value="UniProtKB-KW"/>
</dbReference>
<dbReference type="GO" id="GO:0009055">
    <property type="term" value="F:electron transfer activity"/>
    <property type="evidence" value="ECO:0007669"/>
    <property type="project" value="UniProtKB-UniRule"/>
</dbReference>
<dbReference type="GO" id="GO:0000287">
    <property type="term" value="F:magnesium ion binding"/>
    <property type="evidence" value="ECO:0007669"/>
    <property type="project" value="UniProtKB-UniRule"/>
</dbReference>
<dbReference type="GO" id="GO:0016491">
    <property type="term" value="F:oxidoreductase activity"/>
    <property type="evidence" value="ECO:0007669"/>
    <property type="project" value="UniProtKB-KW"/>
</dbReference>
<dbReference type="GO" id="GO:0015979">
    <property type="term" value="P:photosynthesis"/>
    <property type="evidence" value="ECO:0007669"/>
    <property type="project" value="UniProtKB-UniRule"/>
</dbReference>
<dbReference type="FunFam" id="1.20.1130.10:FF:000001">
    <property type="entry name" value="Photosystem I P700 chlorophyll a apoprotein A2"/>
    <property type="match status" value="1"/>
</dbReference>
<dbReference type="Gene3D" id="1.20.1130.10">
    <property type="entry name" value="Photosystem I PsaA/PsaB"/>
    <property type="match status" value="1"/>
</dbReference>
<dbReference type="HAMAP" id="MF_00458">
    <property type="entry name" value="PSI_PsaA"/>
    <property type="match status" value="1"/>
</dbReference>
<dbReference type="InterPro" id="IPR006243">
    <property type="entry name" value="PSI_PsaA"/>
</dbReference>
<dbReference type="InterPro" id="IPR001280">
    <property type="entry name" value="PSI_PsaA/B"/>
</dbReference>
<dbReference type="InterPro" id="IPR020586">
    <property type="entry name" value="PSI_PsaA/B_CS"/>
</dbReference>
<dbReference type="InterPro" id="IPR036408">
    <property type="entry name" value="PSI_PsaA/B_sf"/>
</dbReference>
<dbReference type="NCBIfam" id="TIGR01335">
    <property type="entry name" value="psaA"/>
    <property type="match status" value="1"/>
</dbReference>
<dbReference type="PANTHER" id="PTHR30128">
    <property type="entry name" value="OUTER MEMBRANE PROTEIN, OMPA-RELATED"/>
    <property type="match status" value="1"/>
</dbReference>
<dbReference type="PANTHER" id="PTHR30128:SF19">
    <property type="entry name" value="PHOTOSYSTEM I P700 CHLOROPHYLL A APOPROTEIN A1-RELATED"/>
    <property type="match status" value="1"/>
</dbReference>
<dbReference type="Pfam" id="PF00223">
    <property type="entry name" value="PsaA_PsaB"/>
    <property type="match status" value="1"/>
</dbReference>
<dbReference type="PIRSF" id="PIRSF002905">
    <property type="entry name" value="PSI_A"/>
    <property type="match status" value="1"/>
</dbReference>
<dbReference type="PRINTS" id="PR00257">
    <property type="entry name" value="PHOTSYSPSAAB"/>
</dbReference>
<dbReference type="SUPFAM" id="SSF81558">
    <property type="entry name" value="Photosystem I subunits PsaA/PsaB"/>
    <property type="match status" value="1"/>
</dbReference>
<dbReference type="PROSITE" id="PS00419">
    <property type="entry name" value="PHOTOSYSTEM_I_PSAAB"/>
    <property type="match status" value="1"/>
</dbReference>
<sequence>MTIRSPEPEVKKVKVVVDRDTVKTSFEKWAKPGHFSRTLAKGPDTTTWIWNLHADAHDFDSHTNNLEDISRKIFSAHFGQLAIIFIWLSGMYYHGARFSNYEAWLADPTHIKPSAQIVWPIVGQEILNGDVGGGFRGIQITSGFFQIWRASGITSELQLYCTAIGALIFAALMLFAGWFHYHKAAPKLAWFQEVESMLNHHLAGLLGLGSLSWAGHQIHVSLPINQLLDAGVDPKEIPLPHEFIFNRDLLAQLYPSFAKGVTPFLTLNWSEYSDFLTFRGGLNPVTGGLWLTDTAHHHLAIAVLFLIAGHMYKTNWRIGHNLKDLLEAHKGPFTGEGHKGLYEILTTSWHAQLAVNLAMLGSLTIVVAHHMYSMPPYPYLATDYGTQLSLFTHHMWIGGFIIVGAAAHAAIFMVRDYDPTTQYNNLLDRVLRHRDAIVSHLNWVCIFLGFHSFGLYIHNDTMSALGRPQDMFSDTAIQLQPIFAQWIQNTHASAPGSTAPGATASTSLTWGGGDLVTVGSKVALLPIPLGTADFLVHHIHAFTIHVTVLILLKGVLFARSSRLIPDKANLGFRFPCDGPGRGGTCQVSAWDHVFLGLFWMYNAISVVIFHFSWKMQSDVWGNISDQGVVTHITGGNFAQSSITINGWLRDFLWAQASQVIQSYGSSLSAYGLLFLGAHFVWAFSLMFLFSGRGYWQELIESIVWAHNKLKVAPAIQPRALSIVQGRAVGVAHYLLGGIVTTWAFFLARIIAIG</sequence>
<organism>
    <name type="scientific">Pinus thunbergii</name>
    <name type="common">Japanese black pine</name>
    <name type="synonym">Pinus thunbergiana</name>
    <dbReference type="NCBI Taxonomy" id="3350"/>
    <lineage>
        <taxon>Eukaryota</taxon>
        <taxon>Viridiplantae</taxon>
        <taxon>Streptophyta</taxon>
        <taxon>Embryophyta</taxon>
        <taxon>Tracheophyta</taxon>
        <taxon>Spermatophyta</taxon>
        <taxon>Pinopsida</taxon>
        <taxon>Pinidae</taxon>
        <taxon>Conifers I</taxon>
        <taxon>Pinales</taxon>
        <taxon>Pinaceae</taxon>
        <taxon>Pinus</taxon>
        <taxon>Pinus subgen. Pinus</taxon>
    </lineage>
</organism>
<protein>
    <recommendedName>
        <fullName evidence="1">Photosystem I P700 chlorophyll a apoprotein A1</fullName>
        <ecNumber evidence="1">1.97.1.12</ecNumber>
    </recommendedName>
    <alternativeName>
        <fullName evidence="1">PSI-A</fullName>
    </alternativeName>
    <alternativeName>
        <fullName evidence="1">PsaA</fullName>
    </alternativeName>
</protein>
<comment type="function">
    <text>PsaA and PsaB bind P700, the primary electron donor of photosystem I (PSI), as well as the electron acceptors A0, A1 and FX. PSI is a plastocyanin-ferredoxin oxidoreductase, converting photonic excitation into a charge separation, which transfers an electron from the donor P700 chlorophyll pair to the spectroscopically characterized acceptors A0, A1, FX, FA and FB in turn. Oxidized P700 is reduced on the lumenal side of the thylakoid membrane by plastocyanin.</text>
</comment>
<comment type="catalytic activity">
    <reaction evidence="1">
        <text>reduced [plastocyanin] + hnu + oxidized [2Fe-2S]-[ferredoxin] = oxidized [plastocyanin] + reduced [2Fe-2S]-[ferredoxin]</text>
        <dbReference type="Rhea" id="RHEA:30407"/>
        <dbReference type="Rhea" id="RHEA-COMP:10000"/>
        <dbReference type="Rhea" id="RHEA-COMP:10001"/>
        <dbReference type="Rhea" id="RHEA-COMP:10039"/>
        <dbReference type="Rhea" id="RHEA-COMP:10040"/>
        <dbReference type="ChEBI" id="CHEBI:29036"/>
        <dbReference type="ChEBI" id="CHEBI:30212"/>
        <dbReference type="ChEBI" id="CHEBI:33737"/>
        <dbReference type="ChEBI" id="CHEBI:33738"/>
        <dbReference type="ChEBI" id="CHEBI:49552"/>
        <dbReference type="EC" id="1.97.1.12"/>
    </reaction>
</comment>
<comment type="cofactor">
    <text evidence="1">P700 is a chlorophyll a/chlorophyll a' dimer, A0 is one or more chlorophyll a, A1 is one or both phylloquinones and FX is a shared 4Fe-4S iron-sulfur center.</text>
</comment>
<comment type="subunit">
    <text evidence="1">The PsaA/B heterodimer binds the P700 chlorophyll special pair and subsequent electron acceptors. PSI consists of a core antenna complex that captures photons, and an electron transfer chain that converts photonic excitation into a charge separation. The eukaryotic PSI reaction center is composed of at least 11 subunits.</text>
</comment>
<comment type="subcellular location">
    <subcellularLocation>
        <location evidence="1">Plastid</location>
        <location evidence="1">Chloroplast thylakoid membrane</location>
        <topology evidence="1">Multi-pass membrane protein</topology>
    </subcellularLocation>
</comment>
<comment type="similarity">
    <text evidence="1">Belongs to the PsaA/PsaB family.</text>
</comment>
<geneLocation type="chloroplast"/>
<accession>P41639</accession>
<name>PSAA_PINTH</name>
<evidence type="ECO:0000255" key="1">
    <source>
        <dbReference type="HAMAP-Rule" id="MF_00458"/>
    </source>
</evidence>
<feature type="chain" id="PRO_0000088571" description="Photosystem I P700 chlorophyll a apoprotein A1">
    <location>
        <begin position="1"/>
        <end position="753"/>
    </location>
</feature>
<feature type="transmembrane region" description="Helical; Name=I" evidence="1">
    <location>
        <begin position="73"/>
        <end position="96"/>
    </location>
</feature>
<feature type="transmembrane region" description="Helical; Name=II" evidence="1">
    <location>
        <begin position="159"/>
        <end position="182"/>
    </location>
</feature>
<feature type="transmembrane region" description="Helical; Name=III" evidence="1">
    <location>
        <begin position="198"/>
        <end position="222"/>
    </location>
</feature>
<feature type="transmembrane region" description="Helical; Name=IV" evidence="1">
    <location>
        <begin position="294"/>
        <end position="312"/>
    </location>
</feature>
<feature type="transmembrane region" description="Helical; Name=V" evidence="1">
    <location>
        <begin position="349"/>
        <end position="372"/>
    </location>
</feature>
<feature type="transmembrane region" description="Helical; Name=VI" evidence="1">
    <location>
        <begin position="388"/>
        <end position="414"/>
    </location>
</feature>
<feature type="transmembrane region" description="Helical; Name=VII" evidence="1">
    <location>
        <begin position="436"/>
        <end position="458"/>
    </location>
</feature>
<feature type="transmembrane region" description="Helical; Name=VIII" evidence="1">
    <location>
        <begin position="534"/>
        <end position="552"/>
    </location>
</feature>
<feature type="transmembrane region" description="Helical; Name=IX" evidence="1">
    <location>
        <begin position="592"/>
        <end position="613"/>
    </location>
</feature>
<feature type="transmembrane region" description="Helical; Name=X" evidence="1">
    <location>
        <begin position="667"/>
        <end position="689"/>
    </location>
</feature>
<feature type="transmembrane region" description="Helical; Name=XI" evidence="1">
    <location>
        <begin position="727"/>
        <end position="747"/>
    </location>
</feature>
<feature type="binding site" evidence="1">
    <location>
        <position position="576"/>
    </location>
    <ligand>
        <name>[4Fe-4S] cluster</name>
        <dbReference type="ChEBI" id="CHEBI:49883"/>
        <note>ligand shared between dimeric partners</note>
    </ligand>
</feature>
<feature type="binding site" evidence="1">
    <location>
        <position position="585"/>
    </location>
    <ligand>
        <name>[4Fe-4S] cluster</name>
        <dbReference type="ChEBI" id="CHEBI:49883"/>
        <note>ligand shared between dimeric partners</note>
    </ligand>
</feature>
<feature type="binding site" description="axial binding residue" evidence="1">
    <location>
        <position position="678"/>
    </location>
    <ligand>
        <name>chlorophyll a'</name>
        <dbReference type="ChEBI" id="CHEBI:189419"/>
        <label>A1</label>
    </ligand>
    <ligandPart>
        <name>Mg</name>
        <dbReference type="ChEBI" id="CHEBI:25107"/>
    </ligandPart>
</feature>
<feature type="binding site" description="axial binding residue" evidence="1">
    <location>
        <position position="686"/>
    </location>
    <ligand>
        <name>chlorophyll a</name>
        <dbReference type="ChEBI" id="CHEBI:58416"/>
        <label>A3</label>
    </ligand>
    <ligandPart>
        <name>Mg</name>
        <dbReference type="ChEBI" id="CHEBI:25107"/>
    </ligandPart>
</feature>
<feature type="binding site" evidence="1">
    <location>
        <position position="694"/>
    </location>
    <ligand>
        <name>chlorophyll a</name>
        <dbReference type="ChEBI" id="CHEBI:58416"/>
        <label>A3</label>
    </ligand>
</feature>
<feature type="binding site" evidence="1">
    <location>
        <position position="695"/>
    </location>
    <ligand>
        <name>phylloquinone</name>
        <dbReference type="ChEBI" id="CHEBI:18067"/>
        <label>A</label>
    </ligand>
</feature>
<gene>
    <name evidence="1" type="primary">psaA</name>
</gene>
<reference key="1">
    <citation type="journal article" date="1994" name="Proc. Natl. Acad. Sci. U.S.A.">
        <title>Loss of all ndh genes as determined by sequencing the entire chloroplast genome of the black pine Pinus thunbergii.</title>
        <authorList>
            <person name="Wakasugi T."/>
            <person name="Tsudzuki J."/>
            <person name="Ito S."/>
            <person name="Nakashima K."/>
            <person name="Tsudzuki T."/>
            <person name="Sugiura M."/>
        </authorList>
    </citation>
    <scope>NUCLEOTIDE SEQUENCE [LARGE SCALE GENOMIC DNA]</scope>
</reference>